<organism>
    <name type="scientific">Staphylococcus aureus (strain USA300)</name>
    <dbReference type="NCBI Taxonomy" id="367830"/>
    <lineage>
        <taxon>Bacteria</taxon>
        <taxon>Bacillati</taxon>
        <taxon>Bacillota</taxon>
        <taxon>Bacilli</taxon>
        <taxon>Bacillales</taxon>
        <taxon>Staphylococcaceae</taxon>
        <taxon>Staphylococcus</taxon>
    </lineage>
</organism>
<proteinExistence type="inferred from homology"/>
<dbReference type="EMBL" id="CP000255">
    <property type="protein sequence ID" value="ABD22319.1"/>
    <property type="molecule type" value="Genomic_DNA"/>
</dbReference>
<dbReference type="SMR" id="Q2FDV8"/>
<dbReference type="KEGG" id="saa:SAUSA300_2486"/>
<dbReference type="HOGENOM" id="CLU_005070_4_3_9"/>
<dbReference type="Proteomes" id="UP000001939">
    <property type="component" value="Chromosome"/>
</dbReference>
<dbReference type="GO" id="GO:0005737">
    <property type="term" value="C:cytoplasm"/>
    <property type="evidence" value="ECO:0007669"/>
    <property type="project" value="TreeGrafter"/>
</dbReference>
<dbReference type="GO" id="GO:0005524">
    <property type="term" value="F:ATP binding"/>
    <property type="evidence" value="ECO:0007669"/>
    <property type="project" value="UniProtKB-KW"/>
</dbReference>
<dbReference type="GO" id="GO:0016887">
    <property type="term" value="F:ATP hydrolysis activity"/>
    <property type="evidence" value="ECO:0007669"/>
    <property type="project" value="InterPro"/>
</dbReference>
<dbReference type="GO" id="GO:0034605">
    <property type="term" value="P:cellular response to heat"/>
    <property type="evidence" value="ECO:0007669"/>
    <property type="project" value="TreeGrafter"/>
</dbReference>
<dbReference type="CDD" id="cd00009">
    <property type="entry name" value="AAA"/>
    <property type="match status" value="1"/>
</dbReference>
<dbReference type="CDD" id="cd19499">
    <property type="entry name" value="RecA-like_ClpB_Hsp104-like"/>
    <property type="match status" value="1"/>
</dbReference>
<dbReference type="FunFam" id="3.40.50.300:FF:000025">
    <property type="entry name" value="ATP-dependent Clp protease subunit"/>
    <property type="match status" value="1"/>
</dbReference>
<dbReference type="Gene3D" id="1.10.8.60">
    <property type="match status" value="2"/>
</dbReference>
<dbReference type="Gene3D" id="3.40.50.300">
    <property type="entry name" value="P-loop containing nucleotide triphosphate hydrolases"/>
    <property type="match status" value="2"/>
</dbReference>
<dbReference type="Gene3D" id="4.10.860.10">
    <property type="entry name" value="UVR domain"/>
    <property type="match status" value="1"/>
</dbReference>
<dbReference type="InterPro" id="IPR003593">
    <property type="entry name" value="AAA+_ATPase"/>
</dbReference>
<dbReference type="InterPro" id="IPR003959">
    <property type="entry name" value="ATPase_AAA_core"/>
</dbReference>
<dbReference type="InterPro" id="IPR019489">
    <property type="entry name" value="Clp_ATPase_C"/>
</dbReference>
<dbReference type="InterPro" id="IPR001270">
    <property type="entry name" value="ClpA/B"/>
</dbReference>
<dbReference type="InterPro" id="IPR041546">
    <property type="entry name" value="ClpA/ClpB_AAA_lid"/>
</dbReference>
<dbReference type="InterPro" id="IPR050130">
    <property type="entry name" value="ClpA_ClpB"/>
</dbReference>
<dbReference type="InterPro" id="IPR027417">
    <property type="entry name" value="P-loop_NTPase"/>
</dbReference>
<dbReference type="PANTHER" id="PTHR11638">
    <property type="entry name" value="ATP-DEPENDENT CLP PROTEASE"/>
    <property type="match status" value="1"/>
</dbReference>
<dbReference type="PANTHER" id="PTHR11638:SF188">
    <property type="entry name" value="ATP-DEPENDENT CLP PROTEASE ATP-BINDING SUBUNIT CLPL"/>
    <property type="match status" value="1"/>
</dbReference>
<dbReference type="Pfam" id="PF00004">
    <property type="entry name" value="AAA"/>
    <property type="match status" value="1"/>
</dbReference>
<dbReference type="Pfam" id="PF07724">
    <property type="entry name" value="AAA_2"/>
    <property type="match status" value="1"/>
</dbReference>
<dbReference type="Pfam" id="PF17871">
    <property type="entry name" value="AAA_lid_9"/>
    <property type="match status" value="1"/>
</dbReference>
<dbReference type="Pfam" id="PF10431">
    <property type="entry name" value="ClpB_D2-small"/>
    <property type="match status" value="1"/>
</dbReference>
<dbReference type="PRINTS" id="PR00300">
    <property type="entry name" value="CLPPROTEASEA"/>
</dbReference>
<dbReference type="SMART" id="SM00382">
    <property type="entry name" value="AAA"/>
    <property type="match status" value="2"/>
</dbReference>
<dbReference type="SMART" id="SM01086">
    <property type="entry name" value="ClpB_D2-small"/>
    <property type="match status" value="1"/>
</dbReference>
<dbReference type="SUPFAM" id="SSF52540">
    <property type="entry name" value="P-loop containing nucleoside triphosphate hydrolases"/>
    <property type="match status" value="2"/>
</dbReference>
<feature type="chain" id="PRO_0000269495" description="ATP-dependent Clp protease ATP-binding subunit ClpL">
    <location>
        <begin position="1"/>
        <end position="701"/>
    </location>
</feature>
<feature type="domain" description="UVR">
    <location>
        <begin position="336"/>
        <end position="371"/>
    </location>
</feature>
<feature type="region of interest" description="Disordered" evidence="3">
    <location>
        <begin position="47"/>
        <end position="79"/>
    </location>
</feature>
<feature type="region of interest" description="I">
    <location>
        <begin position="81"/>
        <end position="332"/>
    </location>
</feature>
<feature type="region of interest" description="II">
    <location>
        <begin position="383"/>
        <end position="575"/>
    </location>
</feature>
<feature type="compositionally biased region" description="Polar residues" evidence="3">
    <location>
        <begin position="47"/>
        <end position="57"/>
    </location>
</feature>
<feature type="compositionally biased region" description="Low complexity" evidence="3">
    <location>
        <begin position="58"/>
        <end position="72"/>
    </location>
</feature>
<feature type="binding site" evidence="2">
    <location>
        <begin position="126"/>
        <end position="133"/>
    </location>
    <ligand>
        <name>ATP</name>
        <dbReference type="ChEBI" id="CHEBI:30616"/>
    </ligand>
</feature>
<feature type="binding site" evidence="2">
    <location>
        <begin position="457"/>
        <end position="464"/>
    </location>
    <ligand>
        <name>ATP</name>
        <dbReference type="ChEBI" id="CHEBI:30616"/>
    </ligand>
</feature>
<gene>
    <name type="primary">clpL</name>
    <name type="ordered locus">SAUSA300_2486</name>
</gene>
<evidence type="ECO:0000250" key="1"/>
<evidence type="ECO:0000255" key="2"/>
<evidence type="ECO:0000256" key="3">
    <source>
        <dbReference type="SAM" id="MobiDB-lite"/>
    </source>
</evidence>
<evidence type="ECO:0000305" key="4"/>
<sequence length="701" mass="77852">MNNGFFNSDFDSIFRRMMKDMQGSNQVGNKKYYINGKEVSPEELAQLTQQGGNHSAEQSAQAFQQAAQRQQGQQGGNGNYLEQIGRNLTQEARDGLLDPVIGRDKEIQETAEVLSRRTKNNPILVGEAGVGKTAIVEGLAQAIVEGNVPAAIKDKEIISVDISSLEAGTQYRGAFEENIQKLIEGVKSSQNAVLFFDEIHQIIGSGATGSDSGSKGLSDILKPALSRGEISIIGATTQDEYRNNILKDSALTRRFNEVLVNEPSAKDTVEILKGIREKFEEHHQVKLPDDVLKACVDLSIQYIPQRLLPDKAIDVLDITAAHLSAQSPAVDKVETEKRISELENDKRKAVSAEEYKKADDIQNEIKSLQDKLENSNGEHTAVATVHDISDTIQRLTGIPVSQMDDNDIERLKNISNRLRSKIIGQDQAVEMVSRAIRRNRAGFDDGNRPIGSFLFVGPTGVGKTELAKQLAIDLFGNKDALIRLDMSEYSDTTAVSKMIGTTAGYVGYDDNSNTLTEKVRRNPYSVILFDEIEKANPQILTLLLQVMDDGNLTDGQGNVINFKNTIIICTSNAGFGNGNDAEEKDIMHEMKKFFRPEFLNRFNGIVEFLHLDKDALQDIVNLLLDDVQVTLDKKGITMDVSQDAKDWLIEEGYDEELGARPLRRIVEQQVRDKITDYYLDHTDVKHVDIDVEDNELVVKGK</sequence>
<reference key="1">
    <citation type="journal article" date="2006" name="Lancet">
        <title>Complete genome sequence of USA300, an epidemic clone of community-acquired meticillin-resistant Staphylococcus aureus.</title>
        <authorList>
            <person name="Diep B.A."/>
            <person name="Gill S.R."/>
            <person name="Chang R.F."/>
            <person name="Phan T.H."/>
            <person name="Chen J.H."/>
            <person name="Davidson M.G."/>
            <person name="Lin F."/>
            <person name="Lin J."/>
            <person name="Carleton H.A."/>
            <person name="Mongodin E.F."/>
            <person name="Sensabaugh G.F."/>
            <person name="Perdreau-Remington F."/>
        </authorList>
    </citation>
    <scope>NUCLEOTIDE SEQUENCE [LARGE SCALE GENOMIC DNA]</scope>
    <source>
        <strain>USA300</strain>
    </source>
</reference>
<keyword id="KW-0067">ATP-binding</keyword>
<keyword id="KW-0143">Chaperone</keyword>
<keyword id="KW-0547">Nucleotide-binding</keyword>
<protein>
    <recommendedName>
        <fullName>ATP-dependent Clp protease ATP-binding subunit ClpL</fullName>
    </recommendedName>
</protein>
<name>CLPL_STAA3</name>
<accession>Q2FDV8</accession>
<comment type="function">
    <text evidence="1">Required for the development of induced thermotolerance.</text>
</comment>
<comment type="similarity">
    <text evidence="4">Belongs to the ClpA/ClpB family. ClpL subfamily.</text>
</comment>